<feature type="chain" id="PRO_1000214080" description="Glucosamine-6-phosphate deaminase">
    <location>
        <begin position="1"/>
        <end position="258"/>
    </location>
</feature>
<feature type="active site" description="Proton acceptor; for enolization step" evidence="1">
    <location>
        <position position="65"/>
    </location>
</feature>
<feature type="active site" description="For ring-opening step" evidence="1">
    <location>
        <position position="134"/>
    </location>
</feature>
<feature type="active site" description="Proton acceptor; for ring-opening step" evidence="1">
    <location>
        <position position="136"/>
    </location>
</feature>
<feature type="active site" description="For ring-opening step" evidence="1">
    <location>
        <position position="141"/>
    </location>
</feature>
<keyword id="KW-0119">Carbohydrate metabolism</keyword>
<keyword id="KW-0378">Hydrolase</keyword>
<keyword id="KW-1185">Reference proteome</keyword>
<sequence length="258" mass="28396">MEIVIRKTPEQVSLQAADILEPYVSEGATLGLATGSTPLGTYQELIRRHNESGLSFANNQAFLLDEYVGLPRDHEQSYYRTIRREFTEHIDIKDEAVSSPDGLADNIDEAGRAYDERIRNAGGVDIQILGIGTDGHIGFNEPGSSLNSPTRLKTLHPQTVSDNARFFDSEDDVPRHVLTQGLGTIQHARHLLLLATGKNKAAAVQALAEGPVSASCPASVLQLHPHATVIIDEAAATCLEHKEYYIFAEKNKPEWQRY</sequence>
<name>NAGB_CORK4</name>
<accession>C4LL80</accession>
<gene>
    <name evidence="1" type="primary">nagB</name>
    <name type="ordered locus">ckrop_1869</name>
</gene>
<proteinExistence type="inferred from homology"/>
<reference key="1">
    <citation type="journal article" date="2008" name="J. Biotechnol.">
        <title>Ultrafast pyrosequencing of Corynebacterium kroppenstedtii DSM44385 revealed insights into the physiology of a lipophilic corynebacterium that lacks mycolic acids.</title>
        <authorList>
            <person name="Tauch A."/>
            <person name="Schneider J."/>
            <person name="Szczepanowski R."/>
            <person name="Tilker A."/>
            <person name="Viehoever P."/>
            <person name="Gartemann K.-H."/>
            <person name="Arnold W."/>
            <person name="Blom J."/>
            <person name="Brinkrolf K."/>
            <person name="Brune I."/>
            <person name="Goetker S."/>
            <person name="Weisshaar B."/>
            <person name="Goesmann A."/>
            <person name="Droege M."/>
            <person name="Puehler A."/>
        </authorList>
    </citation>
    <scope>NUCLEOTIDE SEQUENCE [LARGE SCALE GENOMIC DNA]</scope>
    <source>
        <strain>DSM 44385 / JCM 11950 / CIP 105744 / CCUG 35717</strain>
    </source>
</reference>
<protein>
    <recommendedName>
        <fullName evidence="1">Glucosamine-6-phosphate deaminase</fullName>
        <ecNumber evidence="1">3.5.99.6</ecNumber>
    </recommendedName>
    <alternativeName>
        <fullName evidence="1">GlcN6P deaminase</fullName>
        <shortName evidence="1">GNPDA</shortName>
    </alternativeName>
    <alternativeName>
        <fullName evidence="1">Glucosamine-6-phosphate isomerase</fullName>
    </alternativeName>
</protein>
<evidence type="ECO:0000255" key="1">
    <source>
        <dbReference type="HAMAP-Rule" id="MF_01241"/>
    </source>
</evidence>
<dbReference type="EC" id="3.5.99.6" evidence="1"/>
<dbReference type="EMBL" id="CP001620">
    <property type="protein sequence ID" value="ACR18585.1"/>
    <property type="molecule type" value="Genomic_DNA"/>
</dbReference>
<dbReference type="RefSeq" id="WP_012732472.1">
    <property type="nucleotide sequence ID" value="NC_012704.1"/>
</dbReference>
<dbReference type="SMR" id="C4LL80"/>
<dbReference type="STRING" id="645127.ckrop_1869"/>
<dbReference type="KEGG" id="ckp:ckrop_1869"/>
<dbReference type="eggNOG" id="COG0363">
    <property type="taxonomic scope" value="Bacteria"/>
</dbReference>
<dbReference type="HOGENOM" id="CLU_049611_1_1_11"/>
<dbReference type="OrthoDB" id="9791139at2"/>
<dbReference type="UniPathway" id="UPA00629">
    <property type="reaction ID" value="UER00684"/>
</dbReference>
<dbReference type="Proteomes" id="UP000001473">
    <property type="component" value="Chromosome"/>
</dbReference>
<dbReference type="GO" id="GO:0005737">
    <property type="term" value="C:cytoplasm"/>
    <property type="evidence" value="ECO:0007669"/>
    <property type="project" value="TreeGrafter"/>
</dbReference>
<dbReference type="GO" id="GO:0004342">
    <property type="term" value="F:glucosamine-6-phosphate deaminase activity"/>
    <property type="evidence" value="ECO:0007669"/>
    <property type="project" value="UniProtKB-UniRule"/>
</dbReference>
<dbReference type="GO" id="GO:0042802">
    <property type="term" value="F:identical protein binding"/>
    <property type="evidence" value="ECO:0007669"/>
    <property type="project" value="TreeGrafter"/>
</dbReference>
<dbReference type="GO" id="GO:0005975">
    <property type="term" value="P:carbohydrate metabolic process"/>
    <property type="evidence" value="ECO:0007669"/>
    <property type="project" value="InterPro"/>
</dbReference>
<dbReference type="GO" id="GO:0006043">
    <property type="term" value="P:glucosamine catabolic process"/>
    <property type="evidence" value="ECO:0007669"/>
    <property type="project" value="TreeGrafter"/>
</dbReference>
<dbReference type="GO" id="GO:0006046">
    <property type="term" value="P:N-acetylglucosamine catabolic process"/>
    <property type="evidence" value="ECO:0007669"/>
    <property type="project" value="TreeGrafter"/>
</dbReference>
<dbReference type="GO" id="GO:0019262">
    <property type="term" value="P:N-acetylneuraminate catabolic process"/>
    <property type="evidence" value="ECO:0007669"/>
    <property type="project" value="UniProtKB-UniRule"/>
</dbReference>
<dbReference type="CDD" id="cd01399">
    <property type="entry name" value="GlcN6P_deaminase"/>
    <property type="match status" value="1"/>
</dbReference>
<dbReference type="Gene3D" id="3.40.50.1360">
    <property type="match status" value="1"/>
</dbReference>
<dbReference type="HAMAP" id="MF_01241">
    <property type="entry name" value="GlcN6P_deamin"/>
    <property type="match status" value="1"/>
</dbReference>
<dbReference type="InterPro" id="IPR006148">
    <property type="entry name" value="Glc/Gal-6P_isomerase"/>
</dbReference>
<dbReference type="InterPro" id="IPR004547">
    <property type="entry name" value="Glucosamine6P_isomerase"/>
</dbReference>
<dbReference type="InterPro" id="IPR018321">
    <property type="entry name" value="Glucosamine6P_isomerase_CS"/>
</dbReference>
<dbReference type="InterPro" id="IPR037171">
    <property type="entry name" value="NagB/RpiA_transferase-like"/>
</dbReference>
<dbReference type="NCBIfam" id="TIGR00502">
    <property type="entry name" value="nagB"/>
    <property type="match status" value="1"/>
</dbReference>
<dbReference type="NCBIfam" id="NF001684">
    <property type="entry name" value="PRK00443.1-4"/>
    <property type="match status" value="1"/>
</dbReference>
<dbReference type="PANTHER" id="PTHR11280">
    <property type="entry name" value="GLUCOSAMINE-6-PHOSPHATE ISOMERASE"/>
    <property type="match status" value="1"/>
</dbReference>
<dbReference type="PANTHER" id="PTHR11280:SF5">
    <property type="entry name" value="GLUCOSAMINE-6-PHOSPHATE ISOMERASE"/>
    <property type="match status" value="1"/>
</dbReference>
<dbReference type="Pfam" id="PF01182">
    <property type="entry name" value="Glucosamine_iso"/>
    <property type="match status" value="1"/>
</dbReference>
<dbReference type="SUPFAM" id="SSF100950">
    <property type="entry name" value="NagB/RpiA/CoA transferase-like"/>
    <property type="match status" value="1"/>
</dbReference>
<dbReference type="PROSITE" id="PS01161">
    <property type="entry name" value="GLC_GALNAC_ISOMERASE"/>
    <property type="match status" value="1"/>
</dbReference>
<organism>
    <name type="scientific">Corynebacterium kroppenstedtii (strain DSM 44385 / JCM 11950 / CIP 105744 / CCUG 35717)</name>
    <dbReference type="NCBI Taxonomy" id="645127"/>
    <lineage>
        <taxon>Bacteria</taxon>
        <taxon>Bacillati</taxon>
        <taxon>Actinomycetota</taxon>
        <taxon>Actinomycetes</taxon>
        <taxon>Mycobacteriales</taxon>
        <taxon>Corynebacteriaceae</taxon>
        <taxon>Corynebacterium</taxon>
    </lineage>
</organism>
<comment type="function">
    <text evidence="1">Catalyzes the reversible isomerization-deamination of glucosamine 6-phosphate (GlcN6P) to form fructose 6-phosphate (Fru6P) and ammonium ion.</text>
</comment>
<comment type="catalytic activity">
    <reaction evidence="1">
        <text>alpha-D-glucosamine 6-phosphate + H2O = beta-D-fructose 6-phosphate + NH4(+)</text>
        <dbReference type="Rhea" id="RHEA:12172"/>
        <dbReference type="ChEBI" id="CHEBI:15377"/>
        <dbReference type="ChEBI" id="CHEBI:28938"/>
        <dbReference type="ChEBI" id="CHEBI:57634"/>
        <dbReference type="ChEBI" id="CHEBI:75989"/>
        <dbReference type="EC" id="3.5.99.6"/>
    </reaction>
</comment>
<comment type="pathway">
    <text evidence="1">Amino-sugar metabolism; N-acetylneuraminate degradation; D-fructose 6-phosphate from N-acetylneuraminate: step 5/5.</text>
</comment>
<comment type="similarity">
    <text evidence="1">Belongs to the glucosamine/galactosamine-6-phosphate isomerase family. NagB subfamily.</text>
</comment>